<feature type="chain" id="PRO_0000371819" description="NADH-quinone oxidoreductase subunit D">
    <location>
        <begin position="1"/>
        <end position="418"/>
    </location>
</feature>
<keyword id="KW-0997">Cell inner membrane</keyword>
<keyword id="KW-1003">Cell membrane</keyword>
<keyword id="KW-0472">Membrane</keyword>
<keyword id="KW-0520">NAD</keyword>
<keyword id="KW-0874">Quinone</keyword>
<keyword id="KW-1278">Translocase</keyword>
<keyword id="KW-0813">Transport</keyword>
<keyword id="KW-0830">Ubiquinone</keyword>
<organism>
    <name type="scientific">Bordetella bronchiseptica (strain ATCC BAA-588 / NCTC 13252 / RB50)</name>
    <name type="common">Alcaligenes bronchisepticus</name>
    <dbReference type="NCBI Taxonomy" id="257310"/>
    <lineage>
        <taxon>Bacteria</taxon>
        <taxon>Pseudomonadati</taxon>
        <taxon>Pseudomonadota</taxon>
        <taxon>Betaproteobacteria</taxon>
        <taxon>Burkholderiales</taxon>
        <taxon>Alcaligenaceae</taxon>
        <taxon>Bordetella</taxon>
    </lineage>
</organism>
<comment type="function">
    <text evidence="1">NDH-1 shuttles electrons from NADH, via FMN and iron-sulfur (Fe-S) centers, to quinones in the respiratory chain. The immediate electron acceptor for the enzyme in this species is believed to be ubiquinone. Couples the redox reaction to proton translocation (for every two electrons transferred, four hydrogen ions are translocated across the cytoplasmic membrane), and thus conserves the redox energy in a proton gradient.</text>
</comment>
<comment type="catalytic activity">
    <reaction evidence="1">
        <text>a quinone + NADH + 5 H(+)(in) = a quinol + NAD(+) + 4 H(+)(out)</text>
        <dbReference type="Rhea" id="RHEA:57888"/>
        <dbReference type="ChEBI" id="CHEBI:15378"/>
        <dbReference type="ChEBI" id="CHEBI:24646"/>
        <dbReference type="ChEBI" id="CHEBI:57540"/>
        <dbReference type="ChEBI" id="CHEBI:57945"/>
        <dbReference type="ChEBI" id="CHEBI:132124"/>
    </reaction>
</comment>
<comment type="subunit">
    <text evidence="1">NDH-1 is composed of 14 different subunits. Subunits NuoB, C, D, E, F, and G constitute the peripheral sector of the complex.</text>
</comment>
<comment type="subcellular location">
    <subcellularLocation>
        <location evidence="1">Cell inner membrane</location>
        <topology evidence="1">Peripheral membrane protein</topology>
        <orientation evidence="1">Cytoplasmic side</orientation>
    </subcellularLocation>
</comment>
<comment type="similarity">
    <text evidence="1">Belongs to the complex I 49 kDa subunit family.</text>
</comment>
<dbReference type="EC" id="7.1.1.-" evidence="1"/>
<dbReference type="EMBL" id="BX640448">
    <property type="protein sequence ID" value="CAE35812.1"/>
    <property type="molecule type" value="Genomic_DNA"/>
</dbReference>
<dbReference type="RefSeq" id="WP_003813935.1">
    <property type="nucleotide sequence ID" value="NC_002927.3"/>
</dbReference>
<dbReference type="SMR" id="Q7WCU2"/>
<dbReference type="KEGG" id="bbr:BB3838"/>
<dbReference type="eggNOG" id="COG0649">
    <property type="taxonomic scope" value="Bacteria"/>
</dbReference>
<dbReference type="HOGENOM" id="CLU_015134_1_1_4"/>
<dbReference type="Proteomes" id="UP000001027">
    <property type="component" value="Chromosome"/>
</dbReference>
<dbReference type="GO" id="GO:0005886">
    <property type="term" value="C:plasma membrane"/>
    <property type="evidence" value="ECO:0007669"/>
    <property type="project" value="UniProtKB-SubCell"/>
</dbReference>
<dbReference type="GO" id="GO:0051287">
    <property type="term" value="F:NAD binding"/>
    <property type="evidence" value="ECO:0007669"/>
    <property type="project" value="InterPro"/>
</dbReference>
<dbReference type="GO" id="GO:0050136">
    <property type="term" value="F:NADH:ubiquinone reductase (non-electrogenic) activity"/>
    <property type="evidence" value="ECO:0007669"/>
    <property type="project" value="UniProtKB-UniRule"/>
</dbReference>
<dbReference type="GO" id="GO:0048038">
    <property type="term" value="F:quinone binding"/>
    <property type="evidence" value="ECO:0007669"/>
    <property type="project" value="UniProtKB-KW"/>
</dbReference>
<dbReference type="FunFam" id="1.10.645.10:FF:000005">
    <property type="entry name" value="NADH-quinone oxidoreductase subunit D"/>
    <property type="match status" value="1"/>
</dbReference>
<dbReference type="Gene3D" id="1.10.645.10">
    <property type="entry name" value="Cytochrome-c3 Hydrogenase, chain B"/>
    <property type="match status" value="1"/>
</dbReference>
<dbReference type="HAMAP" id="MF_01358">
    <property type="entry name" value="NDH1_NuoD"/>
    <property type="match status" value="1"/>
</dbReference>
<dbReference type="InterPro" id="IPR001135">
    <property type="entry name" value="NADH_Q_OxRdtase_suD"/>
</dbReference>
<dbReference type="InterPro" id="IPR014029">
    <property type="entry name" value="NADH_UbQ_OxRdtase_49kDa_CS"/>
</dbReference>
<dbReference type="InterPro" id="IPR022885">
    <property type="entry name" value="NDH1_su_D/H"/>
</dbReference>
<dbReference type="InterPro" id="IPR029014">
    <property type="entry name" value="NiFe-Hase_large"/>
</dbReference>
<dbReference type="NCBIfam" id="TIGR01962">
    <property type="entry name" value="NuoD"/>
    <property type="match status" value="1"/>
</dbReference>
<dbReference type="NCBIfam" id="NF004739">
    <property type="entry name" value="PRK06075.1"/>
    <property type="match status" value="1"/>
</dbReference>
<dbReference type="PANTHER" id="PTHR11993:SF10">
    <property type="entry name" value="NADH DEHYDROGENASE [UBIQUINONE] IRON-SULFUR PROTEIN 2, MITOCHONDRIAL"/>
    <property type="match status" value="1"/>
</dbReference>
<dbReference type="PANTHER" id="PTHR11993">
    <property type="entry name" value="NADH-UBIQUINONE OXIDOREDUCTASE 49 KDA SUBUNIT"/>
    <property type="match status" value="1"/>
</dbReference>
<dbReference type="Pfam" id="PF00346">
    <property type="entry name" value="Complex1_49kDa"/>
    <property type="match status" value="1"/>
</dbReference>
<dbReference type="SUPFAM" id="SSF56762">
    <property type="entry name" value="HydB/Nqo4-like"/>
    <property type="match status" value="1"/>
</dbReference>
<dbReference type="PROSITE" id="PS00535">
    <property type="entry name" value="COMPLEX1_49K"/>
    <property type="match status" value="1"/>
</dbReference>
<name>NUOD_BORBR</name>
<proteinExistence type="inferred from homology"/>
<sequence>MAEIKNYTLNFGPQHPAAHGVLRLVLELDGEVIQRADPHIGLLHRATEKLAEHKTFIQALPYMDRLDYVSMMCNEHAYVMAIEKLLGIEAPLRAQYIRVMFDEITRVLNHLMSLGSHALDVGAMAVFLYAFREREDLMDCYEAVSGARMHAAYYRPGGVYRDLPDTMPQYGDSSKYRGEKEVRAMNDARSGSLLDFIEDFTNRFPGCVDEYETLLTDNRIWKQRLVGIGVVDPDRAKALGFTGPMLRGSGVAWDLRKTQPYEVYDLMDFDVPVGVNGDCYDRYLVRVAEMRESNRIIRQCVEWLRNNPGPVMIENHKIAPPSRTAMKSNMEELIHHFKLFSEGFHVPPGEAYAAVEHPKGEFGIYLVADGANKPYRLKIRAPGFAHLQSLDEMARGHMIADAVTIIGTQDIVFGEIDR</sequence>
<reference key="1">
    <citation type="journal article" date="2003" name="Nat. Genet.">
        <title>Comparative analysis of the genome sequences of Bordetella pertussis, Bordetella parapertussis and Bordetella bronchiseptica.</title>
        <authorList>
            <person name="Parkhill J."/>
            <person name="Sebaihia M."/>
            <person name="Preston A."/>
            <person name="Murphy L.D."/>
            <person name="Thomson N.R."/>
            <person name="Harris D.E."/>
            <person name="Holden M.T.G."/>
            <person name="Churcher C.M."/>
            <person name="Bentley S.D."/>
            <person name="Mungall K.L."/>
            <person name="Cerdeno-Tarraga A.-M."/>
            <person name="Temple L."/>
            <person name="James K.D."/>
            <person name="Harris B."/>
            <person name="Quail M.A."/>
            <person name="Achtman M."/>
            <person name="Atkin R."/>
            <person name="Baker S."/>
            <person name="Basham D."/>
            <person name="Bason N."/>
            <person name="Cherevach I."/>
            <person name="Chillingworth T."/>
            <person name="Collins M."/>
            <person name="Cronin A."/>
            <person name="Davis P."/>
            <person name="Doggett J."/>
            <person name="Feltwell T."/>
            <person name="Goble A."/>
            <person name="Hamlin N."/>
            <person name="Hauser H."/>
            <person name="Holroyd S."/>
            <person name="Jagels K."/>
            <person name="Leather S."/>
            <person name="Moule S."/>
            <person name="Norberczak H."/>
            <person name="O'Neil S."/>
            <person name="Ormond D."/>
            <person name="Price C."/>
            <person name="Rabbinowitsch E."/>
            <person name="Rutter S."/>
            <person name="Sanders M."/>
            <person name="Saunders D."/>
            <person name="Seeger K."/>
            <person name="Sharp S."/>
            <person name="Simmonds M."/>
            <person name="Skelton J."/>
            <person name="Squares R."/>
            <person name="Squares S."/>
            <person name="Stevens K."/>
            <person name="Unwin L."/>
            <person name="Whitehead S."/>
            <person name="Barrell B.G."/>
            <person name="Maskell D.J."/>
        </authorList>
    </citation>
    <scope>NUCLEOTIDE SEQUENCE [LARGE SCALE GENOMIC DNA]</scope>
    <source>
        <strain>ATCC BAA-588 / NCTC 13252 / RB50</strain>
    </source>
</reference>
<accession>Q7WCU2</accession>
<protein>
    <recommendedName>
        <fullName evidence="1">NADH-quinone oxidoreductase subunit D</fullName>
        <ecNumber evidence="1">7.1.1.-</ecNumber>
    </recommendedName>
    <alternativeName>
        <fullName evidence="1">NADH dehydrogenase I subunit D</fullName>
    </alternativeName>
    <alternativeName>
        <fullName evidence="1">NDH-1 subunit D</fullName>
    </alternativeName>
</protein>
<evidence type="ECO:0000255" key="1">
    <source>
        <dbReference type="HAMAP-Rule" id="MF_01358"/>
    </source>
</evidence>
<gene>
    <name evidence="1" type="primary">nuoD</name>
    <name type="ordered locus">BB3838</name>
</gene>